<reference key="1">
    <citation type="journal article" date="2005" name="J. Gen. Virol.">
        <title>Complete coding sequences of the rabbitpox virus genome.</title>
        <authorList>
            <person name="Li G."/>
            <person name="Chen N."/>
            <person name="Roper R.L."/>
            <person name="Feng Z."/>
            <person name="Hunter A.L."/>
            <person name="Danila M."/>
            <person name="Lefkowitz E.J."/>
            <person name="Buller R.M.L."/>
            <person name="Upton C."/>
        </authorList>
    </citation>
    <scope>NUCLEOTIDE SEQUENCE [LARGE SCALE GENOMIC DNA]</scope>
</reference>
<accession>Q6RZD4</accession>
<comment type="catalytic activity">
    <reaction>
        <text>dTMP + ATP = dTDP + ADP</text>
        <dbReference type="Rhea" id="RHEA:13517"/>
        <dbReference type="ChEBI" id="CHEBI:30616"/>
        <dbReference type="ChEBI" id="CHEBI:58369"/>
        <dbReference type="ChEBI" id="CHEBI:63528"/>
        <dbReference type="ChEBI" id="CHEBI:456216"/>
        <dbReference type="EC" id="2.7.4.9"/>
    </reaction>
</comment>
<comment type="pathway">
    <text>Pyrimidine metabolism; dTTP biosynthesis.</text>
</comment>
<comment type="similarity">
    <text evidence="1">Belongs to the thymidylate kinase family.</text>
</comment>
<protein>
    <recommendedName>
        <fullName>Thymidylate kinase</fullName>
        <ecNumber>2.7.4.9</ecNumber>
    </recommendedName>
    <alternativeName>
        <fullName>dTMP kinase</fullName>
    </alternativeName>
</protein>
<keyword id="KW-0067">ATP-binding</keyword>
<keyword id="KW-0418">Kinase</keyword>
<keyword id="KW-0545">Nucleotide biosynthesis</keyword>
<keyword id="KW-0547">Nucleotide-binding</keyword>
<keyword id="KW-0808">Transferase</keyword>
<organism>
    <name type="scientific">Rabbitpox virus (strain Utrecht)</name>
    <name type="common">RPV</name>
    <dbReference type="NCBI Taxonomy" id="45417"/>
    <lineage>
        <taxon>Viruses</taxon>
        <taxon>Varidnaviria</taxon>
        <taxon>Bamfordvirae</taxon>
        <taxon>Nucleocytoviricota</taxon>
        <taxon>Pokkesviricetes</taxon>
        <taxon>Chitovirales</taxon>
        <taxon>Poxviridae</taxon>
        <taxon>Chordopoxvirinae</taxon>
        <taxon>Orthopoxvirus</taxon>
        <taxon>Vaccinia virus</taxon>
    </lineage>
</organism>
<evidence type="ECO:0000305" key="1"/>
<gene>
    <name type="primary">TMK</name>
    <name type="ordered locus">RPXV157</name>
</gene>
<feature type="chain" id="PRO_0000155226" description="Thymidylate kinase">
    <location>
        <begin position="1"/>
        <end position="204"/>
    </location>
</feature>
<feature type="binding site" evidence="1">
    <location>
        <begin position="11"/>
        <end position="18"/>
    </location>
    <ligand>
        <name>ATP</name>
        <dbReference type="ChEBI" id="CHEBI:30616"/>
    </ligand>
</feature>
<proteinExistence type="inferred from homology"/>
<organismHost>
    <name type="scientific">Oryctolagus cuniculus</name>
    <name type="common">Rabbit</name>
    <dbReference type="NCBI Taxonomy" id="9986"/>
</organismHost>
<dbReference type="EC" id="2.7.4.9"/>
<dbReference type="EMBL" id="AY484669">
    <property type="protein sequence ID" value="AAS49870.1"/>
    <property type="molecule type" value="Genomic_DNA"/>
</dbReference>
<dbReference type="SMR" id="Q6RZD4"/>
<dbReference type="UniPathway" id="UPA00575"/>
<dbReference type="Proteomes" id="UP000166173">
    <property type="component" value="Segment"/>
</dbReference>
<dbReference type="GO" id="GO:0005524">
    <property type="term" value="F:ATP binding"/>
    <property type="evidence" value="ECO:0007669"/>
    <property type="project" value="UniProtKB-KW"/>
</dbReference>
<dbReference type="GO" id="GO:0004798">
    <property type="term" value="F:dTMP kinase activity"/>
    <property type="evidence" value="ECO:0007669"/>
    <property type="project" value="UniProtKB-EC"/>
</dbReference>
<dbReference type="GO" id="GO:0004550">
    <property type="term" value="F:nucleoside diphosphate kinase activity"/>
    <property type="evidence" value="ECO:0007669"/>
    <property type="project" value="TreeGrafter"/>
</dbReference>
<dbReference type="GO" id="GO:0006233">
    <property type="term" value="P:dTDP biosynthetic process"/>
    <property type="evidence" value="ECO:0007669"/>
    <property type="project" value="InterPro"/>
</dbReference>
<dbReference type="GO" id="GO:0006235">
    <property type="term" value="P:dTTP biosynthetic process"/>
    <property type="evidence" value="ECO:0007669"/>
    <property type="project" value="UniProtKB-UniPathway"/>
</dbReference>
<dbReference type="GO" id="GO:0006227">
    <property type="term" value="P:dUDP biosynthetic process"/>
    <property type="evidence" value="ECO:0007669"/>
    <property type="project" value="TreeGrafter"/>
</dbReference>
<dbReference type="Gene3D" id="3.40.50.300">
    <property type="entry name" value="P-loop containing nucleotide triphosphate hydrolases"/>
    <property type="match status" value="1"/>
</dbReference>
<dbReference type="InterPro" id="IPR027417">
    <property type="entry name" value="P-loop_NTPase"/>
</dbReference>
<dbReference type="InterPro" id="IPR039430">
    <property type="entry name" value="Thymidylate_kin-like_dom"/>
</dbReference>
<dbReference type="InterPro" id="IPR018095">
    <property type="entry name" value="Thymidylate_kin_CS"/>
</dbReference>
<dbReference type="InterPro" id="IPR018094">
    <property type="entry name" value="Thymidylate_kinase"/>
</dbReference>
<dbReference type="NCBIfam" id="TIGR00041">
    <property type="entry name" value="DTMP_kinase"/>
    <property type="match status" value="1"/>
</dbReference>
<dbReference type="PANTHER" id="PTHR10344">
    <property type="entry name" value="THYMIDYLATE KINASE"/>
    <property type="match status" value="1"/>
</dbReference>
<dbReference type="PANTHER" id="PTHR10344:SF1">
    <property type="entry name" value="THYMIDYLATE KINASE"/>
    <property type="match status" value="1"/>
</dbReference>
<dbReference type="Pfam" id="PF02223">
    <property type="entry name" value="Thymidylate_kin"/>
    <property type="match status" value="1"/>
</dbReference>
<dbReference type="SUPFAM" id="SSF52540">
    <property type="entry name" value="P-loop containing nucleoside triphosphate hydrolases"/>
    <property type="match status" value="1"/>
</dbReference>
<dbReference type="PROSITE" id="PS01331">
    <property type="entry name" value="THYMIDYLATE_KINASE"/>
    <property type="match status" value="1"/>
</dbReference>
<sequence length="204" mass="23235">MSRGALIVFEGLDKSGKTTQCMNIMESIPSNTIKYLNFPQRSTVTGKMIDDYLTRKKTYNDHIVNLLFCANRWEFASFIQEQLEQGITLIVDRYAFSGVAYAAAKGASMTLSKSYESGLPKPDLVIFLESGSKEINRNVGEEIYEDVTFQQKVLQEYKKMIEEGDIHWQIISSEFEEDVKKELIKNIVIEAIHTVTGPVGQLWM</sequence>
<name>KTHY_RABPU</name>